<organism>
    <name type="scientific">Bacillus subtilis (strain 168)</name>
    <dbReference type="NCBI Taxonomy" id="224308"/>
    <lineage>
        <taxon>Bacteria</taxon>
        <taxon>Bacillati</taxon>
        <taxon>Bacillota</taxon>
        <taxon>Bacilli</taxon>
        <taxon>Bacillales</taxon>
        <taxon>Bacillaceae</taxon>
        <taxon>Bacillus</taxon>
    </lineage>
</organism>
<sequence>MLNNRNVLLCVSGGIAVYKACALTSKLVQAGANVKVIMTESACRFVSPLTFQALSRHEVYTDTFKEQNPSVISHIDAADWADLIIVAPATANVIGKLANGIADDMLTTTLLAATAPVWIAPAMNVHMYDHPAVKRNISVLYQDGYCFIEPSEGYLACGYVGKGRLEEPENIVKLAEKHFAEETSAPLEGKHVVITAGPTREAIDPVRFFTNKSTGKMGYALAEAAVQLGARVILISGPVSLDQPKGLAEFIPVQSAADMREAVLSVYDASDIVIKTAAVADFTPKTVFDHKMKKQDGGMTLELKRTVDILKELGEKKKEQILVGFAAETQDIEHYARKKLAAKNLDLIVANDVKANGAGFGADTNIVTIFFKDGHKRELPIMSKLDVSFEILQEIAALSKQTGERS</sequence>
<feature type="chain" id="PRO_0000387986" description="Coenzyme A biosynthesis bifunctional protein CoaBC">
    <location>
        <begin position="1"/>
        <end position="406"/>
    </location>
</feature>
<feature type="region of interest" description="Phosphopantothenoylcysteine decarboxylase" evidence="1">
    <location>
        <begin position="1"/>
        <end position="191"/>
    </location>
</feature>
<feature type="region of interest" description="Phosphopantothenate--cysteine ligase" evidence="1">
    <location>
        <begin position="192"/>
        <end position="406"/>
    </location>
</feature>
<feature type="active site" description="Proton donor" evidence="1">
    <location>
        <position position="157"/>
    </location>
</feature>
<feature type="binding site" evidence="1">
    <location>
        <position position="281"/>
    </location>
    <ligand>
        <name>CTP</name>
        <dbReference type="ChEBI" id="CHEBI:37563"/>
    </ligand>
</feature>
<feature type="binding site" evidence="1">
    <location>
        <position position="291"/>
    </location>
    <ligand>
        <name>CTP</name>
        <dbReference type="ChEBI" id="CHEBI:37563"/>
    </ligand>
</feature>
<feature type="binding site" evidence="1">
    <location>
        <position position="325"/>
    </location>
    <ligand>
        <name>CTP</name>
        <dbReference type="ChEBI" id="CHEBI:37563"/>
    </ligand>
</feature>
<feature type="binding site" evidence="1">
    <location>
        <position position="339"/>
    </location>
    <ligand>
        <name>CTP</name>
        <dbReference type="ChEBI" id="CHEBI:37563"/>
    </ligand>
</feature>
<feature type="binding site" evidence="1">
    <location>
        <position position="343"/>
    </location>
    <ligand>
        <name>CTP</name>
        <dbReference type="ChEBI" id="CHEBI:37563"/>
    </ligand>
</feature>
<gene>
    <name evidence="1" type="primary">coaBC</name>
    <name type="synonym">yloI</name>
    <name type="ordered locus">BSU15700</name>
</gene>
<keyword id="KW-0210">Decarboxylase</keyword>
<keyword id="KW-0285">Flavoprotein</keyword>
<keyword id="KW-0288">FMN</keyword>
<keyword id="KW-0436">Ligase</keyword>
<keyword id="KW-0456">Lyase</keyword>
<keyword id="KW-0460">Magnesium</keyword>
<keyword id="KW-0479">Metal-binding</keyword>
<keyword id="KW-0511">Multifunctional enzyme</keyword>
<keyword id="KW-1185">Reference proteome</keyword>
<evidence type="ECO:0000255" key="1">
    <source>
        <dbReference type="HAMAP-Rule" id="MF_02225"/>
    </source>
</evidence>
<accession>O35033</accession>
<accession>Q799L0</accession>
<name>COABC_BACSU</name>
<dbReference type="EC" id="4.1.1.36" evidence="1"/>
<dbReference type="EC" id="6.3.2.5" evidence="1"/>
<dbReference type="EMBL" id="Y13937">
    <property type="protein sequence ID" value="CAA74260.1"/>
    <property type="molecule type" value="Genomic_DNA"/>
</dbReference>
<dbReference type="EMBL" id="AL009126">
    <property type="protein sequence ID" value="CAB13443.1"/>
    <property type="molecule type" value="Genomic_DNA"/>
</dbReference>
<dbReference type="PIR" id="D69878">
    <property type="entry name" value="D69878"/>
</dbReference>
<dbReference type="RefSeq" id="NP_389452.1">
    <property type="nucleotide sequence ID" value="NC_000964.3"/>
</dbReference>
<dbReference type="RefSeq" id="WP_009967219.1">
    <property type="nucleotide sequence ID" value="NZ_OZ025638.1"/>
</dbReference>
<dbReference type="SMR" id="O35033"/>
<dbReference type="FunCoup" id="O35033">
    <property type="interactions" value="692"/>
</dbReference>
<dbReference type="STRING" id="224308.BSU15700"/>
<dbReference type="jPOST" id="O35033"/>
<dbReference type="PaxDb" id="224308-BSU15700"/>
<dbReference type="DNASU" id="938487"/>
<dbReference type="EnsemblBacteria" id="CAB13443">
    <property type="protein sequence ID" value="CAB13443"/>
    <property type="gene ID" value="BSU_15700"/>
</dbReference>
<dbReference type="GeneID" id="938487"/>
<dbReference type="KEGG" id="bsu:BSU15700"/>
<dbReference type="PATRIC" id="fig|224308.179.peg.1710"/>
<dbReference type="eggNOG" id="COG0452">
    <property type="taxonomic scope" value="Bacteria"/>
</dbReference>
<dbReference type="InParanoid" id="O35033"/>
<dbReference type="OrthoDB" id="9802554at2"/>
<dbReference type="PhylomeDB" id="O35033"/>
<dbReference type="BioCyc" id="BSUB:BSU15700-MONOMER"/>
<dbReference type="UniPathway" id="UPA00241">
    <property type="reaction ID" value="UER00353"/>
</dbReference>
<dbReference type="UniPathway" id="UPA00241">
    <property type="reaction ID" value="UER00354"/>
</dbReference>
<dbReference type="Proteomes" id="UP000001570">
    <property type="component" value="Chromosome"/>
</dbReference>
<dbReference type="GO" id="GO:0071513">
    <property type="term" value="C:phosphopantothenoylcysteine decarboxylase complex"/>
    <property type="evidence" value="ECO:0000318"/>
    <property type="project" value="GO_Central"/>
</dbReference>
<dbReference type="GO" id="GO:0010181">
    <property type="term" value="F:FMN binding"/>
    <property type="evidence" value="ECO:0000318"/>
    <property type="project" value="GO_Central"/>
</dbReference>
<dbReference type="GO" id="GO:0046872">
    <property type="term" value="F:metal ion binding"/>
    <property type="evidence" value="ECO:0007669"/>
    <property type="project" value="UniProtKB-KW"/>
</dbReference>
<dbReference type="GO" id="GO:0004632">
    <property type="term" value="F:phosphopantothenate--cysteine ligase activity"/>
    <property type="evidence" value="ECO:0007669"/>
    <property type="project" value="UniProtKB-UniRule"/>
</dbReference>
<dbReference type="GO" id="GO:0004633">
    <property type="term" value="F:phosphopantothenoylcysteine decarboxylase activity"/>
    <property type="evidence" value="ECO:0000318"/>
    <property type="project" value="GO_Central"/>
</dbReference>
<dbReference type="GO" id="GO:0015937">
    <property type="term" value="P:coenzyme A biosynthetic process"/>
    <property type="evidence" value="ECO:0000318"/>
    <property type="project" value="GO_Central"/>
</dbReference>
<dbReference type="GO" id="GO:0015941">
    <property type="term" value="P:pantothenate catabolic process"/>
    <property type="evidence" value="ECO:0007669"/>
    <property type="project" value="InterPro"/>
</dbReference>
<dbReference type="Gene3D" id="3.40.50.10300">
    <property type="entry name" value="CoaB-like"/>
    <property type="match status" value="1"/>
</dbReference>
<dbReference type="Gene3D" id="3.40.50.1950">
    <property type="entry name" value="Flavin prenyltransferase-like"/>
    <property type="match status" value="1"/>
</dbReference>
<dbReference type="HAMAP" id="MF_02225">
    <property type="entry name" value="CoaBC"/>
    <property type="match status" value="1"/>
</dbReference>
<dbReference type="InterPro" id="IPR035929">
    <property type="entry name" value="CoaB-like_sf"/>
</dbReference>
<dbReference type="InterPro" id="IPR005252">
    <property type="entry name" value="CoaBC"/>
</dbReference>
<dbReference type="InterPro" id="IPR007085">
    <property type="entry name" value="DNA/pantothenate-metab_flavo_C"/>
</dbReference>
<dbReference type="InterPro" id="IPR036551">
    <property type="entry name" value="Flavin_trans-like"/>
</dbReference>
<dbReference type="InterPro" id="IPR003382">
    <property type="entry name" value="Flavoprotein"/>
</dbReference>
<dbReference type="NCBIfam" id="TIGR00521">
    <property type="entry name" value="coaBC_dfp"/>
    <property type="match status" value="1"/>
</dbReference>
<dbReference type="PANTHER" id="PTHR14359">
    <property type="entry name" value="HOMO-OLIGOMERIC FLAVIN CONTAINING CYS DECARBOXYLASE FAMILY"/>
    <property type="match status" value="1"/>
</dbReference>
<dbReference type="PANTHER" id="PTHR14359:SF6">
    <property type="entry name" value="PHOSPHOPANTOTHENOYLCYSTEINE DECARBOXYLASE"/>
    <property type="match status" value="1"/>
</dbReference>
<dbReference type="Pfam" id="PF04127">
    <property type="entry name" value="DFP"/>
    <property type="match status" value="1"/>
</dbReference>
<dbReference type="Pfam" id="PF02441">
    <property type="entry name" value="Flavoprotein"/>
    <property type="match status" value="1"/>
</dbReference>
<dbReference type="SUPFAM" id="SSF102645">
    <property type="entry name" value="CoaB-like"/>
    <property type="match status" value="1"/>
</dbReference>
<dbReference type="SUPFAM" id="SSF52507">
    <property type="entry name" value="Homo-oligomeric flavin-containing Cys decarboxylases, HFCD"/>
    <property type="match status" value="1"/>
</dbReference>
<reference key="1">
    <citation type="journal article" date="1998" name="Microbiology">
        <title>A 28 kbp segment from the spoVM region of the Bacillus subtilis 168 genome.</title>
        <authorList>
            <person name="Foulger D."/>
            <person name="Errington J."/>
        </authorList>
    </citation>
    <scope>NUCLEOTIDE SEQUENCE [GENOMIC DNA]</scope>
    <source>
        <strain>168</strain>
    </source>
</reference>
<reference key="2">
    <citation type="journal article" date="1997" name="Nature">
        <title>The complete genome sequence of the Gram-positive bacterium Bacillus subtilis.</title>
        <authorList>
            <person name="Kunst F."/>
            <person name="Ogasawara N."/>
            <person name="Moszer I."/>
            <person name="Albertini A.M."/>
            <person name="Alloni G."/>
            <person name="Azevedo V."/>
            <person name="Bertero M.G."/>
            <person name="Bessieres P."/>
            <person name="Bolotin A."/>
            <person name="Borchert S."/>
            <person name="Borriss R."/>
            <person name="Boursier L."/>
            <person name="Brans A."/>
            <person name="Braun M."/>
            <person name="Brignell S.C."/>
            <person name="Bron S."/>
            <person name="Brouillet S."/>
            <person name="Bruschi C.V."/>
            <person name="Caldwell B."/>
            <person name="Capuano V."/>
            <person name="Carter N.M."/>
            <person name="Choi S.-K."/>
            <person name="Codani J.-J."/>
            <person name="Connerton I.F."/>
            <person name="Cummings N.J."/>
            <person name="Daniel R.A."/>
            <person name="Denizot F."/>
            <person name="Devine K.M."/>
            <person name="Duesterhoeft A."/>
            <person name="Ehrlich S.D."/>
            <person name="Emmerson P.T."/>
            <person name="Entian K.-D."/>
            <person name="Errington J."/>
            <person name="Fabret C."/>
            <person name="Ferrari E."/>
            <person name="Foulger D."/>
            <person name="Fritz C."/>
            <person name="Fujita M."/>
            <person name="Fujita Y."/>
            <person name="Fuma S."/>
            <person name="Galizzi A."/>
            <person name="Galleron N."/>
            <person name="Ghim S.-Y."/>
            <person name="Glaser P."/>
            <person name="Goffeau A."/>
            <person name="Golightly E.J."/>
            <person name="Grandi G."/>
            <person name="Guiseppi G."/>
            <person name="Guy B.J."/>
            <person name="Haga K."/>
            <person name="Haiech J."/>
            <person name="Harwood C.R."/>
            <person name="Henaut A."/>
            <person name="Hilbert H."/>
            <person name="Holsappel S."/>
            <person name="Hosono S."/>
            <person name="Hullo M.-F."/>
            <person name="Itaya M."/>
            <person name="Jones L.-M."/>
            <person name="Joris B."/>
            <person name="Karamata D."/>
            <person name="Kasahara Y."/>
            <person name="Klaerr-Blanchard M."/>
            <person name="Klein C."/>
            <person name="Kobayashi Y."/>
            <person name="Koetter P."/>
            <person name="Koningstein G."/>
            <person name="Krogh S."/>
            <person name="Kumano M."/>
            <person name="Kurita K."/>
            <person name="Lapidus A."/>
            <person name="Lardinois S."/>
            <person name="Lauber J."/>
            <person name="Lazarevic V."/>
            <person name="Lee S.-M."/>
            <person name="Levine A."/>
            <person name="Liu H."/>
            <person name="Masuda S."/>
            <person name="Mauel C."/>
            <person name="Medigue C."/>
            <person name="Medina N."/>
            <person name="Mellado R.P."/>
            <person name="Mizuno M."/>
            <person name="Moestl D."/>
            <person name="Nakai S."/>
            <person name="Noback M."/>
            <person name="Noone D."/>
            <person name="O'Reilly M."/>
            <person name="Ogawa K."/>
            <person name="Ogiwara A."/>
            <person name="Oudega B."/>
            <person name="Park S.-H."/>
            <person name="Parro V."/>
            <person name="Pohl T.M."/>
            <person name="Portetelle D."/>
            <person name="Porwollik S."/>
            <person name="Prescott A.M."/>
            <person name="Presecan E."/>
            <person name="Pujic P."/>
            <person name="Purnelle B."/>
            <person name="Rapoport G."/>
            <person name="Rey M."/>
            <person name="Reynolds S."/>
            <person name="Rieger M."/>
            <person name="Rivolta C."/>
            <person name="Rocha E."/>
            <person name="Roche B."/>
            <person name="Rose M."/>
            <person name="Sadaie Y."/>
            <person name="Sato T."/>
            <person name="Scanlan E."/>
            <person name="Schleich S."/>
            <person name="Schroeter R."/>
            <person name="Scoffone F."/>
            <person name="Sekiguchi J."/>
            <person name="Sekowska A."/>
            <person name="Seror S.J."/>
            <person name="Serror P."/>
            <person name="Shin B.-S."/>
            <person name="Soldo B."/>
            <person name="Sorokin A."/>
            <person name="Tacconi E."/>
            <person name="Takagi T."/>
            <person name="Takahashi H."/>
            <person name="Takemaru K."/>
            <person name="Takeuchi M."/>
            <person name="Tamakoshi A."/>
            <person name="Tanaka T."/>
            <person name="Terpstra P."/>
            <person name="Tognoni A."/>
            <person name="Tosato V."/>
            <person name="Uchiyama S."/>
            <person name="Vandenbol M."/>
            <person name="Vannier F."/>
            <person name="Vassarotti A."/>
            <person name="Viari A."/>
            <person name="Wambutt R."/>
            <person name="Wedler E."/>
            <person name="Wedler H."/>
            <person name="Weitzenegger T."/>
            <person name="Winters P."/>
            <person name="Wipat A."/>
            <person name="Yamamoto H."/>
            <person name="Yamane K."/>
            <person name="Yasumoto K."/>
            <person name="Yata K."/>
            <person name="Yoshida K."/>
            <person name="Yoshikawa H.-F."/>
            <person name="Zumstein E."/>
            <person name="Yoshikawa H."/>
            <person name="Danchin A."/>
        </authorList>
    </citation>
    <scope>NUCLEOTIDE SEQUENCE [LARGE SCALE GENOMIC DNA]</scope>
    <source>
        <strain>168</strain>
    </source>
</reference>
<comment type="function">
    <text evidence="1">Catalyzes two sequential steps in the biosynthesis of coenzyme A. In the first step cysteine is conjugated to 4'-phosphopantothenate to form 4-phosphopantothenoylcysteine. In the second step the latter compound is decarboxylated to form 4'-phosphopantotheine.</text>
</comment>
<comment type="catalytic activity">
    <reaction evidence="1">
        <text>N-[(R)-4-phosphopantothenoyl]-L-cysteine + H(+) = (R)-4'-phosphopantetheine + CO2</text>
        <dbReference type="Rhea" id="RHEA:16793"/>
        <dbReference type="ChEBI" id="CHEBI:15378"/>
        <dbReference type="ChEBI" id="CHEBI:16526"/>
        <dbReference type="ChEBI" id="CHEBI:59458"/>
        <dbReference type="ChEBI" id="CHEBI:61723"/>
        <dbReference type="EC" id="4.1.1.36"/>
    </reaction>
</comment>
<comment type="catalytic activity">
    <reaction evidence="1">
        <text>(R)-4'-phosphopantothenate + L-cysteine + CTP = N-[(R)-4-phosphopantothenoyl]-L-cysteine + CMP + diphosphate + H(+)</text>
        <dbReference type="Rhea" id="RHEA:19397"/>
        <dbReference type="ChEBI" id="CHEBI:10986"/>
        <dbReference type="ChEBI" id="CHEBI:15378"/>
        <dbReference type="ChEBI" id="CHEBI:33019"/>
        <dbReference type="ChEBI" id="CHEBI:35235"/>
        <dbReference type="ChEBI" id="CHEBI:37563"/>
        <dbReference type="ChEBI" id="CHEBI:59458"/>
        <dbReference type="ChEBI" id="CHEBI:60377"/>
        <dbReference type="EC" id="6.3.2.5"/>
    </reaction>
</comment>
<comment type="cofactor">
    <cofactor evidence="1">
        <name>Mg(2+)</name>
        <dbReference type="ChEBI" id="CHEBI:18420"/>
    </cofactor>
</comment>
<comment type="cofactor">
    <cofactor evidence="1">
        <name>FMN</name>
        <dbReference type="ChEBI" id="CHEBI:58210"/>
    </cofactor>
    <text evidence="1">Binds 1 FMN per subunit.</text>
</comment>
<comment type="pathway">
    <text evidence="1">Cofactor biosynthesis; coenzyme A biosynthesis; CoA from (R)-pantothenate: step 2/5.</text>
</comment>
<comment type="pathway">
    <text evidence="1">Cofactor biosynthesis; coenzyme A biosynthesis; CoA from (R)-pantothenate: step 3/5.</text>
</comment>
<comment type="similarity">
    <text evidence="1">In the N-terminal section; belongs to the HFCD (homo-oligomeric flavin containing Cys decarboxylase) superfamily.</text>
</comment>
<comment type="similarity">
    <text evidence="1">In the C-terminal section; belongs to the PPC synthetase family.</text>
</comment>
<proteinExistence type="inferred from homology"/>
<protein>
    <recommendedName>
        <fullName evidence="1">Coenzyme A biosynthesis bifunctional protein CoaBC</fullName>
    </recommendedName>
    <alternativeName>
        <fullName evidence="1">DNA/pantothenate metabolism flavoprotein</fullName>
    </alternativeName>
    <alternativeName>
        <fullName evidence="1">Phosphopantothenoylcysteine synthetase/decarboxylase</fullName>
        <shortName evidence="1">PPCS-PPCDC</shortName>
    </alternativeName>
    <domain>
        <recommendedName>
            <fullName evidence="1">Phosphopantothenoylcysteine decarboxylase</fullName>
            <shortName evidence="1">PPC decarboxylase</shortName>
            <shortName evidence="1">PPC-DC</shortName>
            <ecNumber evidence="1">4.1.1.36</ecNumber>
        </recommendedName>
        <alternativeName>
            <fullName evidence="1">CoaC</fullName>
        </alternativeName>
    </domain>
    <domain>
        <recommendedName>
            <fullName evidence="1">Phosphopantothenate--cysteine ligase</fullName>
            <ecNumber evidence="1">6.3.2.5</ecNumber>
        </recommendedName>
        <alternativeName>
            <fullName evidence="1">CoaB</fullName>
        </alternativeName>
        <alternativeName>
            <fullName evidence="1">Phosphopantothenoylcysteine synthetase</fullName>
            <shortName evidence="1">PPC synthetase</shortName>
            <shortName evidence="1">PPC-S</shortName>
        </alternativeName>
    </domain>
</protein>